<reference key="1">
    <citation type="journal article" date="2010" name="J. Proteome Res.">
        <title>Molecular diversification of peptide toxins from the tarantula Haplopelma hainanum (Ornithoctonus hainana) venom based on transcriptomic, peptidomic, and genomic analyses.</title>
        <authorList>
            <person name="Tang X."/>
            <person name="Zhang Y."/>
            <person name="Hu W."/>
            <person name="Xu D."/>
            <person name="Tao H."/>
            <person name="Yang X."/>
            <person name="Li Y."/>
            <person name="Jiang L."/>
            <person name="Liang S."/>
        </authorList>
    </citation>
    <scope>NUCLEOTIDE SEQUENCE [LARGE SCALE MRNA]</scope>
    <scope>PROTEIN SEQUENCE OF 49-81</scope>
    <scope>IDENTIFICATION BY MASS SPECTROMETRY</scope>
    <source>
        <tissue>Venom</tissue>
        <tissue>Venom gland</tissue>
    </source>
</reference>
<reference key="2">
    <citation type="journal article" date="2003" name="Toxicon">
        <title>Purification and characterization of Hainantoxin-V, a tetrodotoxin-sensitive sodium channel inhibitor from the venom of the spider Selenocosmia hainana.</title>
        <authorList>
            <person name="Xiao Y.-C."/>
            <person name="Liang S.-P."/>
        </authorList>
    </citation>
    <scope>PROTEIN SEQUENCE OF 49-81</scope>
    <source>
        <tissue>Venom</tissue>
    </source>
</reference>
<reference key="3">
    <citation type="journal article" date="2003" name="FEBS Lett.">
        <title>Function and solution structure of hainantoxin-I, a novel insect sodium channel inhibitor from the Chinese bird spider Selenocosmia hainana.</title>
        <authorList>
            <person name="Li D.-L."/>
            <person name="Xiao Y.-C."/>
            <person name="Hu W.-J."/>
            <person name="Xie J.-Y."/>
            <person name="Bosmans F."/>
            <person name="Tytgat J."/>
            <person name="Liang S.-P."/>
        </authorList>
    </citation>
    <scope>SEQUENCE REVISION TO 78-81</scope>
    <scope>FUNCTION</scope>
    <scope>SUBUNIT</scope>
    <scope>SUBCELLULAR LOCATION</scope>
    <scope>MASS SPECTROMETRY</scope>
    <scope>DISULFIDE BONDS</scope>
    <scope>AMIDATION AT LEU-81</scope>
    <scope>STRUCTURE BY NMR</scope>
    <source>
        <tissue>Venom</tissue>
    </source>
</reference>
<reference key="4">
    <citation type="journal article" date="2015" name="Mol. Pharmacol.">
        <title>Rational engineering defines a molecular switch that is essential for activity of spider-venom peptides against the analgesics target NaV1.7.</title>
        <authorList>
            <person name="Klint J.K."/>
            <person name="Chin Y.K."/>
            <person name="Mobli M."/>
        </authorList>
    </citation>
    <scope>STRUCTURE BY NMR OF 48-81 OF WILD-TYPE AND G54W/N71S MUTANT</scope>
    <scope>FUNCTION</scope>
    <scope>RECOMBINANT EXPRESSION OF 48-81</scope>
    <scope>MUTAGENESIS OF LYS-51; GLY-54; ASN-71 AND VAL-79</scope>
</reference>
<name>H1A02_CYRHA</name>
<comment type="function">
    <text evidence="3 5">Weakly blocks the rat SCN2A/SCN1B (Nav1.2/beta-1) sodium channel (IC(50)=68 uM) and the insect sodium channel para/tipE (IC(50)=4.3 uM), without altering the activation or inactivation kinetics (depressant toxin).</text>
</comment>
<comment type="subunit">
    <text evidence="3">Monomer.</text>
</comment>
<comment type="subcellular location">
    <subcellularLocation>
        <location evidence="3">Secreted</location>
    </subcellularLocation>
</comment>
<comment type="tissue specificity">
    <text evidence="3">Expressed by the venom gland.</text>
</comment>
<comment type="domain">
    <text evidence="3 5">The presence of a 'disulfide through disulfide knot' structurally defines this protein as a knottin.</text>
</comment>
<comment type="mass spectrometry" mass="3608.02" method="MALDI" evidence="3"/>
<comment type="miscellaneous">
    <text evidence="3 5">Negative results: has no effect on mammalian SCN3A/SCN1B (Nav1.3/beta-1), SCN4A (Nav1.4), SCN5A/SCN1B (Nav1.5/beta-1), and SCN9A/SCN1B (Nav1.7/beta-1) (PubMed:14675784, PubMed:26429937). Has also no effect on sodium subtypes in rat DRG neurons containing Nav1.1/SCN1A, Nav1.6/SCN8A, Nav1.7/SCN9A, Nav1.8/SCN10A and Nav1.9/SCN11A (PubMed:14675784).</text>
</comment>
<comment type="miscellaneous">
    <text evidence="13">Klint et al., 2015 worked with a recombinant peptide N-terminally extended by an Ala residue (AECKGFGKSCVPGKNECCSGYACNSRDKWCKVLL).</text>
</comment>
<comment type="similarity">
    <text evidence="10">Belongs to the neurotoxin 10 (Hwtx-1) family. 14 (Hntx-1) subfamily.</text>
</comment>
<evidence type="ECO:0000255" key="1"/>
<evidence type="ECO:0000269" key="2">
    <source>
    </source>
</evidence>
<evidence type="ECO:0000269" key="3">
    <source>
    </source>
</evidence>
<evidence type="ECO:0000269" key="4">
    <source>
    </source>
</evidence>
<evidence type="ECO:0000269" key="5">
    <source>
    </source>
</evidence>
<evidence type="ECO:0000303" key="6">
    <source>
    </source>
</evidence>
<evidence type="ECO:0000303" key="7">
    <source>
    </source>
</evidence>
<evidence type="ECO:0000303" key="8">
    <source>
    </source>
</evidence>
<evidence type="ECO:0000303" key="9">
    <source>
    </source>
</evidence>
<evidence type="ECO:0000305" key="10"/>
<evidence type="ECO:0000305" key="11">
    <source>
    </source>
</evidence>
<evidence type="ECO:0000305" key="12">
    <source>
    </source>
</evidence>
<evidence type="ECO:0000305" key="13">
    <source>
    </source>
</evidence>
<organism>
    <name type="scientific">Cyriopagopus hainanus</name>
    <name type="common">Chinese bird spider</name>
    <name type="synonym">Haplopelma hainanum</name>
    <dbReference type="NCBI Taxonomy" id="209901"/>
    <lineage>
        <taxon>Eukaryota</taxon>
        <taxon>Metazoa</taxon>
        <taxon>Ecdysozoa</taxon>
        <taxon>Arthropoda</taxon>
        <taxon>Chelicerata</taxon>
        <taxon>Arachnida</taxon>
        <taxon>Araneae</taxon>
        <taxon>Mygalomorphae</taxon>
        <taxon>Theraphosidae</taxon>
        <taxon>Haplopelma</taxon>
    </lineage>
</organism>
<keyword id="KW-0027">Amidation</keyword>
<keyword id="KW-0903">Direct protein sequencing</keyword>
<keyword id="KW-1015">Disulfide bond</keyword>
<keyword id="KW-0872">Ion channel impairing toxin</keyword>
<keyword id="KW-0960">Knottin</keyword>
<keyword id="KW-0528">Neurotoxin</keyword>
<keyword id="KW-0964">Secreted</keyword>
<keyword id="KW-0732">Signal</keyword>
<keyword id="KW-0800">Toxin</keyword>
<keyword id="KW-0738">Voltage-gated sodium channel impairing toxin</keyword>
<accession>D2Y1X7</accession>
<accession>P83591</accession>
<protein>
    <recommendedName>
        <fullName evidence="13">Mu-theraphotoxin-Hhn2b 2</fullName>
        <shortName evidence="9">Mu-TRTX-Hhn2b</shortName>
    </recommendedName>
    <alternativeName>
        <fullName evidence="6 7 8">Hainantoxin-I</fullName>
        <shortName evidence="6 7 8">HnTx-I</shortName>
    </alternativeName>
    <alternativeName>
        <fullName>Peptide F5-19.03</fullName>
    </alternativeName>
</protein>
<sequence length="83" mass="9270">MKASMFLALAGLVLLFVVCYASESEEKEFPRELISKIFTVDDFKGEERECKGFGKSCVPGKNECCSGYACNSRDKWCKVLLGK</sequence>
<proteinExistence type="evidence at protein level"/>
<dbReference type="EMBL" id="GU292854">
    <property type="protein sequence ID" value="ADB56670.1"/>
    <property type="molecule type" value="mRNA"/>
</dbReference>
<dbReference type="BMRB" id="D2Y1X7"/>
<dbReference type="SMR" id="D2Y1X7"/>
<dbReference type="ArachnoServer" id="AS000338">
    <property type="toxin name" value="mu-theraphotoxin-Hhn2b"/>
</dbReference>
<dbReference type="GO" id="GO:0005576">
    <property type="term" value="C:extracellular region"/>
    <property type="evidence" value="ECO:0007669"/>
    <property type="project" value="UniProtKB-SubCell"/>
</dbReference>
<dbReference type="GO" id="GO:0008200">
    <property type="term" value="F:ion channel inhibitor activity"/>
    <property type="evidence" value="ECO:0007669"/>
    <property type="project" value="InterPro"/>
</dbReference>
<dbReference type="GO" id="GO:0017080">
    <property type="term" value="F:sodium channel regulator activity"/>
    <property type="evidence" value="ECO:0007669"/>
    <property type="project" value="UniProtKB-KW"/>
</dbReference>
<dbReference type="GO" id="GO:0090729">
    <property type="term" value="F:toxin activity"/>
    <property type="evidence" value="ECO:0007669"/>
    <property type="project" value="UniProtKB-KW"/>
</dbReference>
<dbReference type="InterPro" id="IPR011696">
    <property type="entry name" value="Huwentoxin-1"/>
</dbReference>
<dbReference type="InterPro" id="IPR013140">
    <property type="entry name" value="Huwentoxin_CS1"/>
</dbReference>
<dbReference type="Pfam" id="PF07740">
    <property type="entry name" value="Toxin_12"/>
    <property type="match status" value="1"/>
</dbReference>
<dbReference type="SUPFAM" id="SSF57059">
    <property type="entry name" value="omega toxin-like"/>
    <property type="match status" value="1"/>
</dbReference>
<dbReference type="PROSITE" id="PS60021">
    <property type="entry name" value="HWTX_1"/>
    <property type="match status" value="1"/>
</dbReference>
<feature type="signal peptide" evidence="1">
    <location>
        <begin position="1"/>
        <end position="21"/>
    </location>
</feature>
<feature type="propeptide" id="PRO_0000400496" evidence="11 12">
    <location>
        <begin position="22"/>
        <end position="48"/>
    </location>
</feature>
<feature type="peptide" id="PRO_0000400497" description="Mu-theraphotoxin-Hhn2b 2" evidence="2 4">
    <location>
        <begin position="49"/>
        <end position="81"/>
    </location>
</feature>
<feature type="modified residue" description="Leucine amide" evidence="3">
    <location>
        <position position="81"/>
    </location>
</feature>
<feature type="disulfide bond" evidence="3 5">
    <location>
        <begin position="50"/>
        <end position="65"/>
    </location>
</feature>
<feature type="disulfide bond" evidence="3 5">
    <location>
        <begin position="57"/>
        <end position="70"/>
    </location>
</feature>
<feature type="disulfide bond" evidence="3 5">
    <location>
        <begin position="64"/>
        <end position="77"/>
    </location>
</feature>
<feature type="mutagenesis site" description="No gain of activity against hNav1.7/SCN9A." evidence="5">
    <original>K</original>
    <variation>L</variation>
    <location>
        <position position="51"/>
    </location>
</feature>
<feature type="mutagenesis site" description="Low gain of inhibition activity against hNav1.7/SCN9A (IC(50)=2.7 uM), and gain of binding to anionic POPG liposome. Important gain of inhibition activity (IC(50)=440 nM), and gain of binding to anionic POPG liposome; when associated with S-71." evidence="5">
    <original>G</original>
    <variation>W</variation>
    <location>
        <position position="54"/>
    </location>
</feature>
<feature type="mutagenesis site" description="Low gain of inhibition activity against hNav1.7/SCN9A (IC(50)=4.0 uM) and no change in binding to anionic POPG liposome. Important gain of inhibition activity (IC(50)=440 nM), and gain of binding to anionic POPG liposome; when associated with W-54." evidence="5">
    <original>N</original>
    <variation>S</variation>
    <location>
        <position position="71"/>
    </location>
</feature>
<feature type="mutagenesis site" description="No gain of activity against hNav1.7/SCN9A." evidence="5">
    <original>V</original>
    <variation>W</variation>
    <location>
        <position position="79"/>
    </location>
</feature>